<name>XPT_PSEPF</name>
<gene>
    <name evidence="1" type="primary">xpt</name>
    <name type="ordered locus">Pfl01_5520</name>
</gene>
<reference key="1">
    <citation type="journal article" date="2009" name="Genome Biol.">
        <title>Genomic and genetic analyses of diversity and plant interactions of Pseudomonas fluorescens.</title>
        <authorList>
            <person name="Silby M.W."/>
            <person name="Cerdeno-Tarraga A.M."/>
            <person name="Vernikos G.S."/>
            <person name="Giddens S.R."/>
            <person name="Jackson R.W."/>
            <person name="Preston G.M."/>
            <person name="Zhang X.-X."/>
            <person name="Moon C.D."/>
            <person name="Gehrig S.M."/>
            <person name="Godfrey S.A.C."/>
            <person name="Knight C.G."/>
            <person name="Malone J.G."/>
            <person name="Robinson Z."/>
            <person name="Spiers A.J."/>
            <person name="Harris S."/>
            <person name="Challis G.L."/>
            <person name="Yaxley A.M."/>
            <person name="Harris D."/>
            <person name="Seeger K."/>
            <person name="Murphy L."/>
            <person name="Rutter S."/>
            <person name="Squares R."/>
            <person name="Quail M.A."/>
            <person name="Saunders E."/>
            <person name="Mavromatis K."/>
            <person name="Brettin T.S."/>
            <person name="Bentley S.D."/>
            <person name="Hothersall J."/>
            <person name="Stephens E."/>
            <person name="Thomas C.M."/>
            <person name="Parkhill J."/>
            <person name="Levy S.B."/>
            <person name="Rainey P.B."/>
            <person name="Thomson N.R."/>
        </authorList>
    </citation>
    <scope>NUCLEOTIDE SEQUENCE [LARGE SCALE GENOMIC DNA]</scope>
    <source>
        <strain>Pf0-1</strain>
    </source>
</reference>
<evidence type="ECO:0000255" key="1">
    <source>
        <dbReference type="HAMAP-Rule" id="MF_01184"/>
    </source>
</evidence>
<organism>
    <name type="scientific">Pseudomonas fluorescens (strain Pf0-1)</name>
    <dbReference type="NCBI Taxonomy" id="205922"/>
    <lineage>
        <taxon>Bacteria</taxon>
        <taxon>Pseudomonadati</taxon>
        <taxon>Pseudomonadota</taxon>
        <taxon>Gammaproteobacteria</taxon>
        <taxon>Pseudomonadales</taxon>
        <taxon>Pseudomonadaceae</taxon>
        <taxon>Pseudomonas</taxon>
    </lineage>
</organism>
<comment type="function">
    <text evidence="1">Converts the preformed base xanthine, a product of nucleic acid breakdown, to xanthosine 5'-monophosphate (XMP), so it can be reused for RNA or DNA synthesis.</text>
</comment>
<comment type="catalytic activity">
    <reaction evidence="1">
        <text>XMP + diphosphate = xanthine + 5-phospho-alpha-D-ribose 1-diphosphate</text>
        <dbReference type="Rhea" id="RHEA:10800"/>
        <dbReference type="ChEBI" id="CHEBI:17712"/>
        <dbReference type="ChEBI" id="CHEBI:33019"/>
        <dbReference type="ChEBI" id="CHEBI:57464"/>
        <dbReference type="ChEBI" id="CHEBI:58017"/>
        <dbReference type="EC" id="2.4.2.22"/>
    </reaction>
</comment>
<comment type="pathway">
    <text evidence="1">Purine metabolism; XMP biosynthesis via salvage pathway; XMP from xanthine: step 1/1.</text>
</comment>
<comment type="subunit">
    <text evidence="1">Homodimer.</text>
</comment>
<comment type="subcellular location">
    <subcellularLocation>
        <location evidence="1">Cytoplasm</location>
    </subcellularLocation>
</comment>
<comment type="similarity">
    <text evidence="1">Belongs to the purine/pyrimidine phosphoribosyltransferase family. Xpt subfamily.</text>
</comment>
<feature type="chain" id="PRO_0000339732" description="Xanthine phosphoribosyltransferase">
    <location>
        <begin position="1"/>
        <end position="190"/>
    </location>
</feature>
<feature type="binding site" evidence="1">
    <location>
        <position position="20"/>
    </location>
    <ligand>
        <name>xanthine</name>
        <dbReference type="ChEBI" id="CHEBI:17712"/>
    </ligand>
</feature>
<feature type="binding site" evidence="1">
    <location>
        <position position="27"/>
    </location>
    <ligand>
        <name>xanthine</name>
        <dbReference type="ChEBI" id="CHEBI:17712"/>
    </ligand>
</feature>
<feature type="binding site" evidence="1">
    <location>
        <begin position="128"/>
        <end position="132"/>
    </location>
    <ligand>
        <name>5-phospho-alpha-D-ribose 1-diphosphate</name>
        <dbReference type="ChEBI" id="CHEBI:58017"/>
    </ligand>
</feature>
<feature type="binding site" evidence="1">
    <location>
        <position position="156"/>
    </location>
    <ligand>
        <name>xanthine</name>
        <dbReference type="ChEBI" id="CHEBI:17712"/>
    </ligand>
</feature>
<sequence>MEALHQKIREQGIVLSDQVLKVDAFLNHQIDPALMKLIGDEFATLFKDSGITKIVTIEASGIAPAIMTGLNLGVPVIFARKQQSLTLTENLLSATVYSFTKKTESTVAISPRHLTSSDRVLIIDDFLANGKASQALISIIKQAGATVAGLGIVIEKSFQGGRAELDSQGYRVESLARVKSLKDGVVTFIE</sequence>
<keyword id="KW-0963">Cytoplasm</keyword>
<keyword id="KW-0328">Glycosyltransferase</keyword>
<keyword id="KW-0660">Purine salvage</keyword>
<keyword id="KW-0808">Transferase</keyword>
<accession>Q3K4P7</accession>
<proteinExistence type="inferred from homology"/>
<dbReference type="EC" id="2.4.2.22" evidence="1"/>
<dbReference type="EMBL" id="CP000094">
    <property type="protein sequence ID" value="ABA77257.1"/>
    <property type="molecule type" value="Genomic_DNA"/>
</dbReference>
<dbReference type="RefSeq" id="WP_003229440.1">
    <property type="nucleotide sequence ID" value="NC_007492.2"/>
</dbReference>
<dbReference type="SMR" id="Q3K4P7"/>
<dbReference type="KEGG" id="pfo:Pfl01_5520"/>
<dbReference type="eggNOG" id="COG0503">
    <property type="taxonomic scope" value="Bacteria"/>
</dbReference>
<dbReference type="HOGENOM" id="CLU_099015_0_0_6"/>
<dbReference type="UniPathway" id="UPA00602">
    <property type="reaction ID" value="UER00658"/>
</dbReference>
<dbReference type="Proteomes" id="UP000002704">
    <property type="component" value="Chromosome"/>
</dbReference>
<dbReference type="GO" id="GO:0005737">
    <property type="term" value="C:cytoplasm"/>
    <property type="evidence" value="ECO:0007669"/>
    <property type="project" value="UniProtKB-SubCell"/>
</dbReference>
<dbReference type="GO" id="GO:0000310">
    <property type="term" value="F:xanthine phosphoribosyltransferase activity"/>
    <property type="evidence" value="ECO:0007669"/>
    <property type="project" value="UniProtKB-UniRule"/>
</dbReference>
<dbReference type="GO" id="GO:0006166">
    <property type="term" value="P:purine ribonucleoside salvage"/>
    <property type="evidence" value="ECO:0007669"/>
    <property type="project" value="UniProtKB-KW"/>
</dbReference>
<dbReference type="GO" id="GO:0046110">
    <property type="term" value="P:xanthine metabolic process"/>
    <property type="evidence" value="ECO:0007669"/>
    <property type="project" value="InterPro"/>
</dbReference>
<dbReference type="GO" id="GO:0032265">
    <property type="term" value="P:XMP salvage"/>
    <property type="evidence" value="ECO:0007669"/>
    <property type="project" value="UniProtKB-UniRule"/>
</dbReference>
<dbReference type="CDD" id="cd06223">
    <property type="entry name" value="PRTases_typeI"/>
    <property type="match status" value="1"/>
</dbReference>
<dbReference type="FunFam" id="3.40.50.2020:FF:000027">
    <property type="entry name" value="Xanthine phosphoribosyltransferase"/>
    <property type="match status" value="1"/>
</dbReference>
<dbReference type="Gene3D" id="3.40.50.2020">
    <property type="match status" value="1"/>
</dbReference>
<dbReference type="HAMAP" id="MF_01184">
    <property type="entry name" value="XPRTase"/>
    <property type="match status" value="1"/>
</dbReference>
<dbReference type="InterPro" id="IPR000836">
    <property type="entry name" value="PRibTrfase_dom"/>
</dbReference>
<dbReference type="InterPro" id="IPR029057">
    <property type="entry name" value="PRTase-like"/>
</dbReference>
<dbReference type="InterPro" id="IPR050118">
    <property type="entry name" value="Pur/Pyrimidine_PRTase"/>
</dbReference>
<dbReference type="InterPro" id="IPR010079">
    <property type="entry name" value="Xanthine_PRibTrfase"/>
</dbReference>
<dbReference type="NCBIfam" id="NF006671">
    <property type="entry name" value="PRK09219.1"/>
    <property type="match status" value="1"/>
</dbReference>
<dbReference type="NCBIfam" id="TIGR01744">
    <property type="entry name" value="XPRTase"/>
    <property type="match status" value="1"/>
</dbReference>
<dbReference type="PANTHER" id="PTHR43864">
    <property type="entry name" value="HYPOXANTHINE/GUANINE PHOSPHORIBOSYLTRANSFERASE"/>
    <property type="match status" value="1"/>
</dbReference>
<dbReference type="PANTHER" id="PTHR43864:SF1">
    <property type="entry name" value="XANTHINE PHOSPHORIBOSYLTRANSFERASE"/>
    <property type="match status" value="1"/>
</dbReference>
<dbReference type="Pfam" id="PF00156">
    <property type="entry name" value="Pribosyltran"/>
    <property type="match status" value="1"/>
</dbReference>
<dbReference type="SUPFAM" id="SSF53271">
    <property type="entry name" value="PRTase-like"/>
    <property type="match status" value="1"/>
</dbReference>
<protein>
    <recommendedName>
        <fullName evidence="1">Xanthine phosphoribosyltransferase</fullName>
        <shortName evidence="1">XPRTase</shortName>
        <ecNumber evidence="1">2.4.2.22</ecNumber>
    </recommendedName>
</protein>